<evidence type="ECO:0000250" key="1"/>
<evidence type="ECO:0000250" key="2">
    <source>
        <dbReference type="UniProtKB" id="Q6DN12"/>
    </source>
</evidence>
<evidence type="ECO:0000255" key="3"/>
<evidence type="ECO:0000255" key="4">
    <source>
        <dbReference type="PROSITE-ProRule" id="PRU00041"/>
    </source>
</evidence>
<evidence type="ECO:0000256" key="5">
    <source>
        <dbReference type="SAM" id="MobiDB-lite"/>
    </source>
</evidence>
<evidence type="ECO:0000269" key="6">
    <source>
    </source>
</evidence>
<evidence type="ECO:0000305" key="7"/>
<reference key="1">
    <citation type="journal article" date="2004" name="Genome Res.">
        <title>The status, quality, and expansion of the NIH full-length cDNA project: the Mammalian Gene Collection (MGC).</title>
        <authorList>
            <consortium name="The MGC Project Team"/>
        </authorList>
    </citation>
    <scope>NUCLEOTIDE SEQUENCE [LARGE SCALE MRNA]</scope>
    <source>
        <strain>C57BL/6J</strain>
        <tissue>Brain</tissue>
    </source>
</reference>
<reference key="2">
    <citation type="journal article" date="2013" name="Hum. Mol. Genet.">
        <title>MCTP2 is a dosage-sensitive gene required for cardiac outflow tract development.</title>
        <authorList>
            <person name="Lalani S.R."/>
            <person name="Ware S.M."/>
            <person name="Wang X."/>
            <person name="Zapata G."/>
            <person name="Tian Q."/>
            <person name="Franco L.M."/>
            <person name="Jiang Z."/>
            <person name="Bucasas K."/>
            <person name="Scott D.A."/>
            <person name="Campeau P.M."/>
            <person name="Hanchard N."/>
            <person name="Umana L."/>
            <person name="Cast A."/>
            <person name="Patel A."/>
            <person name="Cheung S.W."/>
            <person name="McBride K.L."/>
            <person name="Bray M."/>
            <person name="Craig Chinault A."/>
            <person name="Boggs B.A."/>
            <person name="Huang M."/>
            <person name="Baker M.R."/>
            <person name="Hamilton S."/>
            <person name="Towbin J."/>
            <person name="Jefferies J.L."/>
            <person name="Fernbach S.D."/>
            <person name="Potocki L."/>
            <person name="Belmont J.W."/>
        </authorList>
    </citation>
    <scope>DEVELOPMENTAL STAGE</scope>
</reference>
<keyword id="KW-0106">Calcium</keyword>
<keyword id="KW-0217">Developmental protein</keyword>
<keyword id="KW-0472">Membrane</keyword>
<keyword id="KW-0479">Metal-binding</keyword>
<keyword id="KW-1185">Reference proteome</keyword>
<keyword id="KW-0677">Repeat</keyword>
<keyword id="KW-0812">Transmembrane</keyword>
<keyword id="KW-1133">Transmembrane helix</keyword>
<protein>
    <recommendedName>
        <fullName>Multiple C2 and transmembrane domain-containing protein 2</fullName>
    </recommendedName>
</protein>
<name>MCTP2_MOUSE</name>
<gene>
    <name type="primary">Mctp2</name>
    <name type="synonym">Gm489</name>
</gene>
<organism>
    <name type="scientific">Mus musculus</name>
    <name type="common">Mouse</name>
    <dbReference type="NCBI Taxonomy" id="10090"/>
    <lineage>
        <taxon>Eukaryota</taxon>
        <taxon>Metazoa</taxon>
        <taxon>Chordata</taxon>
        <taxon>Craniata</taxon>
        <taxon>Vertebrata</taxon>
        <taxon>Euteleostomi</taxon>
        <taxon>Mammalia</taxon>
        <taxon>Eutheria</taxon>
        <taxon>Euarchontoglires</taxon>
        <taxon>Glires</taxon>
        <taxon>Rodentia</taxon>
        <taxon>Myomorpha</taxon>
        <taxon>Muroidea</taxon>
        <taxon>Muridae</taxon>
        <taxon>Murinae</taxon>
        <taxon>Mus</taxon>
        <taxon>Mus</taxon>
    </lineage>
</organism>
<accession>Q5RJH2</accession>
<dbReference type="EMBL" id="BC086658">
    <property type="protein sequence ID" value="AAH86658.1"/>
    <property type="molecule type" value="mRNA"/>
</dbReference>
<dbReference type="CCDS" id="CCDS21361.1"/>
<dbReference type="RefSeq" id="NP_001019874.1">
    <property type="nucleotide sequence ID" value="NM_001024703.1"/>
</dbReference>
<dbReference type="RefSeq" id="XP_006540962.1">
    <property type="nucleotide sequence ID" value="XM_006540899.4"/>
</dbReference>
<dbReference type="RefSeq" id="XP_030098441.1">
    <property type="nucleotide sequence ID" value="XM_030242581.2"/>
</dbReference>
<dbReference type="SMR" id="Q5RJH2"/>
<dbReference type="FunCoup" id="Q5RJH2">
    <property type="interactions" value="1401"/>
</dbReference>
<dbReference type="STRING" id="10090.ENSMUSP00000078302"/>
<dbReference type="iPTMnet" id="Q5RJH2"/>
<dbReference type="PhosphoSitePlus" id="Q5RJH2"/>
<dbReference type="jPOST" id="Q5RJH2"/>
<dbReference type="PaxDb" id="10090-ENSMUSP00000078302"/>
<dbReference type="ProteomicsDB" id="293437"/>
<dbReference type="Antibodypedia" id="29077">
    <property type="antibodies" value="158 antibodies from 22 providers"/>
</dbReference>
<dbReference type="DNASU" id="244049"/>
<dbReference type="Ensembl" id="ENSMUST00000079323.8">
    <property type="protein sequence ID" value="ENSMUSP00000078302.6"/>
    <property type="gene ID" value="ENSMUSG00000032776.10"/>
</dbReference>
<dbReference type="GeneID" id="244049"/>
<dbReference type="KEGG" id="mmu:244049"/>
<dbReference type="UCSC" id="uc009hnp.1">
    <property type="organism name" value="mouse"/>
</dbReference>
<dbReference type="AGR" id="MGI:2685335"/>
<dbReference type="CTD" id="55784"/>
<dbReference type="MGI" id="MGI:2685335">
    <property type="gene designation" value="Mctp2"/>
</dbReference>
<dbReference type="VEuPathDB" id="HostDB:ENSMUSG00000032776"/>
<dbReference type="eggNOG" id="KOG1030">
    <property type="taxonomic scope" value="Eukaryota"/>
</dbReference>
<dbReference type="GeneTree" id="ENSGT00940000156291"/>
<dbReference type="HOGENOM" id="CLU_011170_0_2_1"/>
<dbReference type="InParanoid" id="Q5RJH2"/>
<dbReference type="OMA" id="YEADEMK"/>
<dbReference type="OrthoDB" id="5973539at2759"/>
<dbReference type="PhylomeDB" id="Q5RJH2"/>
<dbReference type="TreeFam" id="TF323373"/>
<dbReference type="BioGRID-ORCS" id="244049">
    <property type="hits" value="3 hits in 77 CRISPR screens"/>
</dbReference>
<dbReference type="ChiTaRS" id="Mctp2">
    <property type="organism name" value="mouse"/>
</dbReference>
<dbReference type="PRO" id="PR:Q5RJH2"/>
<dbReference type="Proteomes" id="UP000000589">
    <property type="component" value="Chromosome 7"/>
</dbReference>
<dbReference type="RNAct" id="Q5RJH2">
    <property type="molecule type" value="protein"/>
</dbReference>
<dbReference type="Bgee" id="ENSMUSG00000032776">
    <property type="expression patterns" value="Expressed in secondary oocyte and 114 other cell types or tissues"/>
</dbReference>
<dbReference type="ExpressionAtlas" id="Q5RJH2">
    <property type="expression patterns" value="baseline and differential"/>
</dbReference>
<dbReference type="GO" id="GO:0005829">
    <property type="term" value="C:cytosol"/>
    <property type="evidence" value="ECO:0007669"/>
    <property type="project" value="Ensembl"/>
</dbReference>
<dbReference type="GO" id="GO:0016020">
    <property type="term" value="C:membrane"/>
    <property type="evidence" value="ECO:0000250"/>
    <property type="project" value="HGNC-UCL"/>
</dbReference>
<dbReference type="GO" id="GO:0005654">
    <property type="term" value="C:nucleoplasm"/>
    <property type="evidence" value="ECO:0007669"/>
    <property type="project" value="Ensembl"/>
</dbReference>
<dbReference type="GO" id="GO:0005509">
    <property type="term" value="F:calcium ion binding"/>
    <property type="evidence" value="ECO:0000250"/>
    <property type="project" value="HGNC-UCL"/>
</dbReference>
<dbReference type="CDD" id="cd04042">
    <property type="entry name" value="C2A_MCTP_PRT"/>
    <property type="match status" value="1"/>
</dbReference>
<dbReference type="CDD" id="cd08376">
    <property type="entry name" value="C2B_MCTP_PRT"/>
    <property type="match status" value="1"/>
</dbReference>
<dbReference type="CDD" id="cd08377">
    <property type="entry name" value="C2C_MCTP_PRT"/>
    <property type="match status" value="1"/>
</dbReference>
<dbReference type="FunFam" id="2.60.40.150:FF:000019">
    <property type="entry name" value="Multiple C2 and transmembrane domain-containing protein 2 isoform 1"/>
    <property type="match status" value="1"/>
</dbReference>
<dbReference type="FunFam" id="2.60.40.150:FF:000076">
    <property type="entry name" value="multiple C2 and transmembrane domain-containing protein 2 isoform X1"/>
    <property type="match status" value="1"/>
</dbReference>
<dbReference type="FunFam" id="2.60.40.150:FF:000088">
    <property type="entry name" value="multiple C2 and transmembrane domain-containing protein 2 isoform X2"/>
    <property type="match status" value="1"/>
</dbReference>
<dbReference type="Gene3D" id="2.60.40.150">
    <property type="entry name" value="C2 domain"/>
    <property type="match status" value="3"/>
</dbReference>
<dbReference type="InterPro" id="IPR000008">
    <property type="entry name" value="C2_dom"/>
</dbReference>
<dbReference type="InterPro" id="IPR035892">
    <property type="entry name" value="C2_domain_sf"/>
</dbReference>
<dbReference type="InterPro" id="IPR013583">
    <property type="entry name" value="MCTP_C"/>
</dbReference>
<dbReference type="PANTHER" id="PTHR45911">
    <property type="entry name" value="C2 DOMAIN-CONTAINING PROTEIN"/>
    <property type="match status" value="1"/>
</dbReference>
<dbReference type="PANTHER" id="PTHR45911:SF2">
    <property type="entry name" value="MULTIPLE C2 AND TRANSMEMBRANE DOMAIN-CONTAINING PROTEIN 2"/>
    <property type="match status" value="1"/>
</dbReference>
<dbReference type="Pfam" id="PF00168">
    <property type="entry name" value="C2"/>
    <property type="match status" value="3"/>
</dbReference>
<dbReference type="Pfam" id="PF08372">
    <property type="entry name" value="PRT_C"/>
    <property type="match status" value="1"/>
</dbReference>
<dbReference type="SMART" id="SM00239">
    <property type="entry name" value="C2"/>
    <property type="match status" value="3"/>
</dbReference>
<dbReference type="SUPFAM" id="SSF49562">
    <property type="entry name" value="C2 domain (Calcium/lipid-binding domain, CaLB)"/>
    <property type="match status" value="3"/>
</dbReference>
<dbReference type="PROSITE" id="PS50004">
    <property type="entry name" value="C2"/>
    <property type="match status" value="3"/>
</dbReference>
<sequence length="878" mass="100178">MDLDKPSVWGSLKQRTRPLLINLSKKKAKKSPSKPLDLRVQHHLDRRLSLSVPDLLEAEALAPEGRPYSGPQSSYISVPNSLSTAGIVPKSSSSSLKQSEEELDWSQEEASHVHGVDTDSEEIYASPAEEWQAFSQSALDLHKPSLGRDAPEEHDKTHGNDDLNASMTSQHFEEESTLGEASDCVSHLPSPFAYLLTIHLKEGRNLVVRDRCGTSDPYVKFKLNGKTLYKSKVIYKNLNPIWDEIVVLPIQSLDQKLRVKVYDRDLTKSDFMGSAFVVLRDLELNRTTEHILKLEDPNSLEDDMGVIVLNLNLVVKQGDFKRHRWSNRKRLSASKSSLIRNLRLSESLRKNQLWNGIISITLLEGKNVSGGNMTEMFVQLKLGEQRYKSKTLCKSANPQWQEQFDFHYFSDRMGILDIEVWGKDSKKHEERLGTCKVDISALPLKQDNCLELPLESCQGALLMLITLTPCTGVSISDLCVCPFEDPSERQQISQRYAFQNSLKDVKDVGILQVKVLKASDLLAADFSGKSDPFCLLELGNDRLQTHTIYKNLNPEWNKVFTFPIKDIHDVLEVTVFDEDGDKAPDFLGKVAIPLLSIRDGQPNCYVLKNKDLEQAFKGLIYLELDLIYNPVKASIRTFTPREKRFVEDSRKLSKKILSRDVDRVKRLTLAIWNTVQFFKSCFQWESTLRSTIAFVVFLVTVWNFELYMIPLALLLLFLYNFLRPMKGKASSTQDSQESTDVEEEGKEEEKESEKKGIIERIYMVQDIVSTVQNILEEVASFGERIKNVFNWTVPFLSLLACLILAITTVILYFIPLRYIILLWGINKFTKKLRNPYSIDNNELLDFLSRVPSDIQKVQYAELKLCGSHSPLRKKRSTV</sequence>
<comment type="function">
    <text evidence="2">Might play a role in the development of cardiac outflow tract.</text>
</comment>
<comment type="cofactor">
    <cofactor evidence="4">
        <name>Ca(2+)</name>
        <dbReference type="ChEBI" id="CHEBI:29108"/>
    </cofactor>
    <text evidence="1">Binds Ca(2+) via the C2 domains in absence of phospholipids.</text>
</comment>
<comment type="subcellular location">
    <subcellularLocation>
        <location evidence="7">Membrane</location>
        <topology evidence="7">Multi-pass membrane protein</topology>
    </subcellularLocation>
</comment>
<comment type="developmental stage">
    <text evidence="6">Expressed at high levels in the developing heart, with high levels at 9.5 dpc that progressively decrease until 11.5 dpc.</text>
</comment>
<comment type="similarity">
    <text evidence="7">Belongs to the MCTP family.</text>
</comment>
<feature type="chain" id="PRO_0000294473" description="Multiple C2 and transmembrane domain-containing protein 2">
    <location>
        <begin position="1"/>
        <end position="878"/>
    </location>
</feature>
<feature type="transmembrane region" description="Helical" evidence="3">
    <location>
        <begin position="694"/>
        <end position="714"/>
    </location>
</feature>
<feature type="transmembrane region" description="Helical" evidence="3">
    <location>
        <begin position="794"/>
        <end position="814"/>
    </location>
</feature>
<feature type="domain" description="C2 1" evidence="4">
    <location>
        <begin position="177"/>
        <end position="292"/>
    </location>
</feature>
<feature type="domain" description="C2 2" evidence="4">
    <location>
        <begin position="334"/>
        <end position="452"/>
    </location>
</feature>
<feature type="domain" description="C2 3" evidence="4">
    <location>
        <begin position="486"/>
        <end position="607"/>
    </location>
</feature>
<feature type="region of interest" description="Disordered" evidence="5">
    <location>
        <begin position="20"/>
        <end position="40"/>
    </location>
</feature>
<feature type="region of interest" description="Disordered" evidence="5">
    <location>
        <begin position="143"/>
        <end position="178"/>
    </location>
</feature>
<feature type="region of interest" description="Disordered" evidence="5">
    <location>
        <begin position="728"/>
        <end position="752"/>
    </location>
</feature>
<feature type="compositionally biased region" description="Basic and acidic residues" evidence="5">
    <location>
        <begin position="149"/>
        <end position="161"/>
    </location>
</feature>
<feature type="compositionally biased region" description="Acidic residues" evidence="5">
    <location>
        <begin position="737"/>
        <end position="746"/>
    </location>
</feature>
<feature type="binding site" evidence="4">
    <location>
        <position position="210"/>
    </location>
    <ligand>
        <name>Ca(2+)</name>
        <dbReference type="ChEBI" id="CHEBI:29108"/>
        <label>1</label>
    </ligand>
</feature>
<feature type="binding site" evidence="4">
    <location>
        <position position="210"/>
    </location>
    <ligand>
        <name>Ca(2+)</name>
        <dbReference type="ChEBI" id="CHEBI:29108"/>
        <label>2</label>
    </ligand>
</feature>
<feature type="binding site" evidence="4">
    <location>
        <position position="216"/>
    </location>
    <ligand>
        <name>Ca(2+)</name>
        <dbReference type="ChEBI" id="CHEBI:29108"/>
        <label>1</label>
    </ligand>
</feature>
<feature type="binding site" evidence="4">
    <location>
        <position position="263"/>
    </location>
    <ligand>
        <name>Ca(2+)</name>
        <dbReference type="ChEBI" id="CHEBI:29108"/>
        <label>1</label>
    </ligand>
</feature>
<feature type="binding site" evidence="4">
    <location>
        <position position="263"/>
    </location>
    <ligand>
        <name>Ca(2+)</name>
        <dbReference type="ChEBI" id="CHEBI:29108"/>
        <label>2</label>
    </ligand>
</feature>
<feature type="binding site" evidence="4">
    <location>
        <position position="265"/>
    </location>
    <ligand>
        <name>Ca(2+)</name>
        <dbReference type="ChEBI" id="CHEBI:29108"/>
        <label>1</label>
    </ligand>
</feature>
<feature type="binding site" evidence="4">
    <location>
        <position position="265"/>
    </location>
    <ligand>
        <name>Ca(2+)</name>
        <dbReference type="ChEBI" id="CHEBI:29108"/>
        <label>2</label>
    </ligand>
</feature>
<feature type="binding site" evidence="4">
    <location>
        <position position="270"/>
    </location>
    <ligand>
        <name>Ca(2+)</name>
        <dbReference type="ChEBI" id="CHEBI:29108"/>
        <label>2</label>
    </ligand>
</feature>
<feature type="binding site" evidence="4">
    <location>
        <position position="525"/>
    </location>
    <ligand>
        <name>Ca(2+)</name>
        <dbReference type="ChEBI" id="CHEBI:29108"/>
        <label>3</label>
    </ligand>
</feature>
<feature type="binding site" evidence="4">
    <location>
        <position position="525"/>
    </location>
    <ligand>
        <name>Ca(2+)</name>
        <dbReference type="ChEBI" id="CHEBI:29108"/>
        <label>4</label>
    </ligand>
</feature>
<feature type="binding site" evidence="4">
    <location>
        <position position="531"/>
    </location>
    <ligand>
        <name>Ca(2+)</name>
        <dbReference type="ChEBI" id="CHEBI:29108"/>
        <label>3</label>
    </ligand>
</feature>
<feature type="binding site" evidence="4">
    <location>
        <position position="577"/>
    </location>
    <ligand>
        <name>Ca(2+)</name>
        <dbReference type="ChEBI" id="CHEBI:29108"/>
        <label>3</label>
    </ligand>
</feature>
<feature type="binding site" evidence="4">
    <location>
        <position position="577"/>
    </location>
    <ligand>
        <name>Ca(2+)</name>
        <dbReference type="ChEBI" id="CHEBI:29108"/>
        <label>4</label>
    </ligand>
</feature>
<feature type="binding site" evidence="4">
    <location>
        <position position="579"/>
    </location>
    <ligand>
        <name>Ca(2+)</name>
        <dbReference type="ChEBI" id="CHEBI:29108"/>
        <label>3</label>
    </ligand>
</feature>
<feature type="binding site" evidence="4">
    <location>
        <position position="579"/>
    </location>
    <ligand>
        <name>Ca(2+)</name>
        <dbReference type="ChEBI" id="CHEBI:29108"/>
        <label>4</label>
    </ligand>
</feature>
<feature type="binding site" evidence="4">
    <location>
        <position position="585"/>
    </location>
    <ligand>
        <name>Ca(2+)</name>
        <dbReference type="ChEBI" id="CHEBI:29108"/>
        <label>4</label>
    </ligand>
</feature>
<proteinExistence type="evidence at transcript level"/>